<evidence type="ECO:0000255" key="1">
    <source>
        <dbReference type="HAMAP-Rule" id="MF_02002"/>
    </source>
</evidence>
<reference key="1">
    <citation type="journal article" date="2007" name="J. Bacteriol.">
        <title>Genome sequence of Avery's virulent serotype 2 strain D39 of Streptococcus pneumoniae and comparison with that of unencapsulated laboratory strain R6.</title>
        <authorList>
            <person name="Lanie J.A."/>
            <person name="Ng W.-L."/>
            <person name="Kazmierczak K.M."/>
            <person name="Andrzejewski T.M."/>
            <person name="Davidsen T.M."/>
            <person name="Wayne K.J."/>
            <person name="Tettelin H."/>
            <person name="Glass J.I."/>
            <person name="Winkler M.E."/>
        </authorList>
    </citation>
    <scope>NUCLEOTIDE SEQUENCE [LARGE SCALE GENOMIC DNA]</scope>
    <source>
        <strain>D39 / NCTC 7466</strain>
    </source>
</reference>
<feature type="chain" id="PRO_1000022131" description="Isoleucine--tRNA ligase">
    <location>
        <begin position="1"/>
        <end position="930"/>
    </location>
</feature>
<feature type="short sequence motif" description="'HIGH' region">
    <location>
        <begin position="57"/>
        <end position="67"/>
    </location>
</feature>
<feature type="short sequence motif" description="'KMSKS' region">
    <location>
        <begin position="595"/>
        <end position="599"/>
    </location>
</feature>
<feature type="binding site" evidence="1">
    <location>
        <position position="554"/>
    </location>
    <ligand>
        <name>L-isoleucyl-5'-AMP</name>
        <dbReference type="ChEBI" id="CHEBI:178002"/>
    </ligand>
</feature>
<feature type="binding site" evidence="1">
    <location>
        <position position="598"/>
    </location>
    <ligand>
        <name>ATP</name>
        <dbReference type="ChEBI" id="CHEBI:30616"/>
    </ligand>
</feature>
<feature type="binding site" evidence="1">
    <location>
        <position position="888"/>
    </location>
    <ligand>
        <name>Zn(2+)</name>
        <dbReference type="ChEBI" id="CHEBI:29105"/>
    </ligand>
</feature>
<feature type="binding site" evidence="1">
    <location>
        <position position="891"/>
    </location>
    <ligand>
        <name>Zn(2+)</name>
        <dbReference type="ChEBI" id="CHEBI:29105"/>
    </ligand>
</feature>
<feature type="binding site" evidence="1">
    <location>
        <position position="908"/>
    </location>
    <ligand>
        <name>Zn(2+)</name>
        <dbReference type="ChEBI" id="CHEBI:29105"/>
    </ligand>
</feature>
<feature type="binding site" evidence="1">
    <location>
        <position position="911"/>
    </location>
    <ligand>
        <name>Zn(2+)</name>
        <dbReference type="ChEBI" id="CHEBI:29105"/>
    </ligand>
</feature>
<keyword id="KW-0030">Aminoacyl-tRNA synthetase</keyword>
<keyword id="KW-0067">ATP-binding</keyword>
<keyword id="KW-0963">Cytoplasm</keyword>
<keyword id="KW-0436">Ligase</keyword>
<keyword id="KW-0479">Metal-binding</keyword>
<keyword id="KW-0547">Nucleotide-binding</keyword>
<keyword id="KW-0648">Protein biosynthesis</keyword>
<keyword id="KW-1185">Reference proteome</keyword>
<keyword id="KW-0862">Zinc</keyword>
<proteinExistence type="inferred from homology"/>
<gene>
    <name evidence="1" type="primary">ileS</name>
    <name type="ordered locus">SPD_1472</name>
</gene>
<protein>
    <recommendedName>
        <fullName evidence="1">Isoleucine--tRNA ligase</fullName>
        <ecNumber evidence="1">6.1.1.5</ecNumber>
    </recommendedName>
    <alternativeName>
        <fullName evidence="1">Isoleucyl-tRNA synthetase</fullName>
        <shortName evidence="1">IleRS</shortName>
    </alternativeName>
</protein>
<organism>
    <name type="scientific">Streptococcus pneumoniae serotype 2 (strain D39 / NCTC 7466)</name>
    <dbReference type="NCBI Taxonomy" id="373153"/>
    <lineage>
        <taxon>Bacteria</taxon>
        <taxon>Bacillati</taxon>
        <taxon>Bacillota</taxon>
        <taxon>Bacilli</taxon>
        <taxon>Lactobacillales</taxon>
        <taxon>Streptococcaceae</taxon>
        <taxon>Streptococcus</taxon>
    </lineage>
</organism>
<comment type="function">
    <text evidence="1">Catalyzes the attachment of isoleucine to tRNA(Ile). As IleRS can inadvertently accommodate and process structurally similar amino acids such as valine, to avoid such errors it has two additional distinct tRNA(Ile)-dependent editing activities. One activity is designated as 'pretransfer' editing and involves the hydrolysis of activated Val-AMP. The other activity is designated 'posttransfer' editing and involves deacylation of mischarged Val-tRNA(Ile).</text>
</comment>
<comment type="catalytic activity">
    <reaction evidence="1">
        <text>tRNA(Ile) + L-isoleucine + ATP = L-isoleucyl-tRNA(Ile) + AMP + diphosphate</text>
        <dbReference type="Rhea" id="RHEA:11060"/>
        <dbReference type="Rhea" id="RHEA-COMP:9666"/>
        <dbReference type="Rhea" id="RHEA-COMP:9695"/>
        <dbReference type="ChEBI" id="CHEBI:30616"/>
        <dbReference type="ChEBI" id="CHEBI:33019"/>
        <dbReference type="ChEBI" id="CHEBI:58045"/>
        <dbReference type="ChEBI" id="CHEBI:78442"/>
        <dbReference type="ChEBI" id="CHEBI:78528"/>
        <dbReference type="ChEBI" id="CHEBI:456215"/>
        <dbReference type="EC" id="6.1.1.5"/>
    </reaction>
</comment>
<comment type="cofactor">
    <cofactor evidence="1">
        <name>Zn(2+)</name>
        <dbReference type="ChEBI" id="CHEBI:29105"/>
    </cofactor>
    <text evidence="1">Binds 1 zinc ion per subunit.</text>
</comment>
<comment type="subunit">
    <text evidence="1">Monomer.</text>
</comment>
<comment type="subcellular location">
    <subcellularLocation>
        <location evidence="1">Cytoplasm</location>
    </subcellularLocation>
</comment>
<comment type="domain">
    <text evidence="1">IleRS has two distinct active sites: one for aminoacylation and one for editing. The misactivated valine is translocated from the active site to the editing site, which sterically excludes the correctly activated isoleucine. The single editing site contains two valyl binding pockets, one specific for each substrate (Val-AMP or Val-tRNA(Ile)).</text>
</comment>
<comment type="similarity">
    <text evidence="1">Belongs to the class-I aminoacyl-tRNA synthetase family. IleS type 1 subfamily.</text>
</comment>
<sequence>MKLKDTLNLGKTEFPMRAGLPTKEPVWQKEWEYAKLYQRRQELNQGKPHFTLHDGPPYANGNIHVGHAMNKISKDIIVRSKSMSGFYAPFIPGWDTHGLPIEQVLSKQGVKRKEMDLVEYLKLCREYALSQVDKQREDFKRLGVSGDWENPYVTLTPDYEAAQIRVFGEMANKGYIYRGAKPVYWSWSSESALAEAEIEYHDLVSTSLYYANKVKDGKGVLDTDTYIVVWTTTPFTITASRGLTVGADIDYVLVQPAGEARKFVVAAELLTSLSEKFGWADVQVLETYRGQELNHIVTEHPWDTAVEELVILGDHVTTDSGTGIVHTAPGFGEDDYNVGIANNLEVAVTVDERGIMMKNAGPEFEGQFYEKVVPTVIEKLGNLLLAQEEISHSYPFDWRTKKPIIWRAVPQWFASVSKFRQEILDEIEKVKFHSEWGKVRLYNMIRDRGDWVISRQRAWGVPLPIFYAEDGTAIMVAETIEHVAQLFEEHGSSIWWERDAKDLLPEGFTHPGSPNGEFKKETDIMDVWFDSGSSWNGVVVNRPELTYPADLYLEGSDQYRGWFNSSLITSVANHGVAPYKQILSQGFALDGKGEKMSKSLGNTIAPSDVEKQFGAEILRLWVTSVDSSNDVRISMDILSQVSETYRKIRNTLRFLIANTSDFNPAQDTVAYDELRSVDKYMTIRFNQLVKTIRDAYADFEFLTIYKALVNFINVDLSAFYLDFAKDVVYIEGAKSLERRQMQTVFYDILVKITKLLTPILPHTAEEIWSYLEFETEDFVQLSELPEVQTFANQEEILDTWAAFMDFRGQAQKALEEARNAKVIGKSLEAHLTVYPNEVVKTLLEAVNSNVAQLLIVSELTIAEGPAPEAALSFEDVAFTVERATGEVCDRCRRIDPTTAERSYQAVICDHCASIVEENFAEAVAEGFEEK</sequence>
<dbReference type="EC" id="6.1.1.5" evidence="1"/>
<dbReference type="EMBL" id="CP000410">
    <property type="protein sequence ID" value="ABJ54238.1"/>
    <property type="molecule type" value="Genomic_DNA"/>
</dbReference>
<dbReference type="RefSeq" id="WP_000768092.1">
    <property type="nucleotide sequence ID" value="NZ_JAMLJR010000013.1"/>
</dbReference>
<dbReference type="SMR" id="Q04JB0"/>
<dbReference type="PaxDb" id="373153-SPD_1472"/>
<dbReference type="KEGG" id="spd:SPD_1472"/>
<dbReference type="eggNOG" id="COG0060">
    <property type="taxonomic scope" value="Bacteria"/>
</dbReference>
<dbReference type="HOGENOM" id="CLU_001493_7_1_9"/>
<dbReference type="BioCyc" id="SPNE373153:G1G6V-1588-MONOMER"/>
<dbReference type="BRENDA" id="6.1.1.5">
    <property type="organism ID" value="1960"/>
</dbReference>
<dbReference type="Proteomes" id="UP000001452">
    <property type="component" value="Chromosome"/>
</dbReference>
<dbReference type="GO" id="GO:0005829">
    <property type="term" value="C:cytosol"/>
    <property type="evidence" value="ECO:0007669"/>
    <property type="project" value="TreeGrafter"/>
</dbReference>
<dbReference type="GO" id="GO:0002161">
    <property type="term" value="F:aminoacyl-tRNA deacylase activity"/>
    <property type="evidence" value="ECO:0007669"/>
    <property type="project" value="InterPro"/>
</dbReference>
<dbReference type="GO" id="GO:0005524">
    <property type="term" value="F:ATP binding"/>
    <property type="evidence" value="ECO:0007669"/>
    <property type="project" value="UniProtKB-UniRule"/>
</dbReference>
<dbReference type="GO" id="GO:0004822">
    <property type="term" value="F:isoleucine-tRNA ligase activity"/>
    <property type="evidence" value="ECO:0007669"/>
    <property type="project" value="UniProtKB-UniRule"/>
</dbReference>
<dbReference type="GO" id="GO:0000049">
    <property type="term" value="F:tRNA binding"/>
    <property type="evidence" value="ECO:0007669"/>
    <property type="project" value="InterPro"/>
</dbReference>
<dbReference type="GO" id="GO:0008270">
    <property type="term" value="F:zinc ion binding"/>
    <property type="evidence" value="ECO:0007669"/>
    <property type="project" value="UniProtKB-UniRule"/>
</dbReference>
<dbReference type="GO" id="GO:0006428">
    <property type="term" value="P:isoleucyl-tRNA aminoacylation"/>
    <property type="evidence" value="ECO:0007669"/>
    <property type="project" value="UniProtKB-UniRule"/>
</dbReference>
<dbReference type="CDD" id="cd07960">
    <property type="entry name" value="Anticodon_Ia_Ile_BEm"/>
    <property type="match status" value="1"/>
</dbReference>
<dbReference type="CDD" id="cd00818">
    <property type="entry name" value="IleRS_core"/>
    <property type="match status" value="1"/>
</dbReference>
<dbReference type="FunFam" id="1.10.10.830:FF:000001">
    <property type="entry name" value="Isoleucine--tRNA ligase"/>
    <property type="match status" value="1"/>
</dbReference>
<dbReference type="FunFam" id="1.10.730.20:FF:000001">
    <property type="entry name" value="Isoleucine--tRNA ligase"/>
    <property type="match status" value="1"/>
</dbReference>
<dbReference type="FunFam" id="3.40.50.620:FF:000092">
    <property type="entry name" value="Isoleucine--tRNA ligase"/>
    <property type="match status" value="1"/>
</dbReference>
<dbReference type="FunFam" id="3.90.740.10:FF:000006">
    <property type="entry name" value="Isoleucine--tRNA ligase"/>
    <property type="match status" value="1"/>
</dbReference>
<dbReference type="Gene3D" id="1.10.730.20">
    <property type="match status" value="1"/>
</dbReference>
<dbReference type="Gene3D" id="3.40.50.620">
    <property type="entry name" value="HUPs"/>
    <property type="match status" value="2"/>
</dbReference>
<dbReference type="Gene3D" id="1.10.10.830">
    <property type="entry name" value="Ile-tRNA synthetase CP2 domain-like"/>
    <property type="match status" value="1"/>
</dbReference>
<dbReference type="Gene3D" id="3.90.740.10">
    <property type="entry name" value="Valyl/Leucyl/Isoleucyl-tRNA synthetase, editing domain"/>
    <property type="match status" value="1"/>
</dbReference>
<dbReference type="HAMAP" id="MF_02002">
    <property type="entry name" value="Ile_tRNA_synth_type1"/>
    <property type="match status" value="1"/>
</dbReference>
<dbReference type="InterPro" id="IPR001412">
    <property type="entry name" value="aa-tRNA-synth_I_CS"/>
</dbReference>
<dbReference type="InterPro" id="IPR002300">
    <property type="entry name" value="aa-tRNA-synth_Ia"/>
</dbReference>
<dbReference type="InterPro" id="IPR033708">
    <property type="entry name" value="Anticodon_Ile_BEm"/>
</dbReference>
<dbReference type="InterPro" id="IPR002301">
    <property type="entry name" value="Ile-tRNA-ligase"/>
</dbReference>
<dbReference type="InterPro" id="IPR023585">
    <property type="entry name" value="Ile-tRNA-ligase_type1"/>
</dbReference>
<dbReference type="InterPro" id="IPR050081">
    <property type="entry name" value="Ile-tRNA_ligase"/>
</dbReference>
<dbReference type="InterPro" id="IPR013155">
    <property type="entry name" value="M/V/L/I-tRNA-synth_anticd-bd"/>
</dbReference>
<dbReference type="InterPro" id="IPR014729">
    <property type="entry name" value="Rossmann-like_a/b/a_fold"/>
</dbReference>
<dbReference type="InterPro" id="IPR009080">
    <property type="entry name" value="tRNAsynth_Ia_anticodon-bd"/>
</dbReference>
<dbReference type="InterPro" id="IPR009008">
    <property type="entry name" value="Val/Leu/Ile-tRNA-synth_edit"/>
</dbReference>
<dbReference type="InterPro" id="IPR010663">
    <property type="entry name" value="Znf_FPG/IleRS"/>
</dbReference>
<dbReference type="NCBIfam" id="TIGR00392">
    <property type="entry name" value="ileS"/>
    <property type="match status" value="1"/>
</dbReference>
<dbReference type="PANTHER" id="PTHR42765:SF1">
    <property type="entry name" value="ISOLEUCINE--TRNA LIGASE, MITOCHONDRIAL"/>
    <property type="match status" value="1"/>
</dbReference>
<dbReference type="PANTHER" id="PTHR42765">
    <property type="entry name" value="SOLEUCYL-TRNA SYNTHETASE"/>
    <property type="match status" value="1"/>
</dbReference>
<dbReference type="Pfam" id="PF08264">
    <property type="entry name" value="Anticodon_1"/>
    <property type="match status" value="1"/>
</dbReference>
<dbReference type="Pfam" id="PF00133">
    <property type="entry name" value="tRNA-synt_1"/>
    <property type="match status" value="1"/>
</dbReference>
<dbReference type="Pfam" id="PF06827">
    <property type="entry name" value="zf-FPG_IleRS"/>
    <property type="match status" value="1"/>
</dbReference>
<dbReference type="PRINTS" id="PR00984">
    <property type="entry name" value="TRNASYNTHILE"/>
</dbReference>
<dbReference type="SUPFAM" id="SSF47323">
    <property type="entry name" value="Anticodon-binding domain of a subclass of class I aminoacyl-tRNA synthetases"/>
    <property type="match status" value="1"/>
</dbReference>
<dbReference type="SUPFAM" id="SSF52374">
    <property type="entry name" value="Nucleotidylyl transferase"/>
    <property type="match status" value="1"/>
</dbReference>
<dbReference type="SUPFAM" id="SSF50677">
    <property type="entry name" value="ValRS/IleRS/LeuRS editing domain"/>
    <property type="match status" value="1"/>
</dbReference>
<dbReference type="PROSITE" id="PS00178">
    <property type="entry name" value="AA_TRNA_LIGASE_I"/>
    <property type="match status" value="1"/>
</dbReference>
<name>SYI_STRP2</name>
<accession>Q04JB0</accession>